<reference key="1">
    <citation type="journal article" date="1998" name="Nature">
        <title>Deciphering the biology of Mycobacterium tuberculosis from the complete genome sequence.</title>
        <authorList>
            <person name="Cole S.T."/>
            <person name="Brosch R."/>
            <person name="Parkhill J."/>
            <person name="Garnier T."/>
            <person name="Churcher C.M."/>
            <person name="Harris D.E."/>
            <person name="Gordon S.V."/>
            <person name="Eiglmeier K."/>
            <person name="Gas S."/>
            <person name="Barry C.E. III"/>
            <person name="Tekaia F."/>
            <person name="Badcock K."/>
            <person name="Basham D."/>
            <person name="Brown D."/>
            <person name="Chillingworth T."/>
            <person name="Connor R."/>
            <person name="Davies R.M."/>
            <person name="Devlin K."/>
            <person name="Feltwell T."/>
            <person name="Gentles S."/>
            <person name="Hamlin N."/>
            <person name="Holroyd S."/>
            <person name="Hornsby T."/>
            <person name="Jagels K."/>
            <person name="Krogh A."/>
            <person name="McLean J."/>
            <person name="Moule S."/>
            <person name="Murphy L.D."/>
            <person name="Oliver S."/>
            <person name="Osborne J."/>
            <person name="Quail M.A."/>
            <person name="Rajandream M.A."/>
            <person name="Rogers J."/>
            <person name="Rutter S."/>
            <person name="Seeger K."/>
            <person name="Skelton S."/>
            <person name="Squares S."/>
            <person name="Squares R."/>
            <person name="Sulston J.E."/>
            <person name="Taylor K."/>
            <person name="Whitehead S."/>
            <person name="Barrell B.G."/>
        </authorList>
    </citation>
    <scope>NUCLEOTIDE SEQUENCE [LARGE SCALE GENOMIC DNA]</scope>
    <source>
        <strain>ATCC 25618 / H37Rv</strain>
    </source>
</reference>
<reference key="2">
    <citation type="journal article" date="2004" name="FEMS Microbiol. Lett.">
        <title>Characterisation of complex formation between members of the Mycobacterium tuberculosis complex CFP-10/ESAT-6 protein family: towards an understanding of the rules governing complex formation and thereby functional flexibility.</title>
        <authorList>
            <person name="Lightbody K.L."/>
            <person name="Renshaw P.S."/>
            <person name="Collins M.L."/>
            <person name="Wright R.L."/>
            <person name="Hunt D.M."/>
            <person name="Gordon S.V."/>
            <person name="Hewinson R.G."/>
            <person name="Buxton R.S."/>
            <person name="Williamson R.A."/>
            <person name="Carr M.D."/>
        </authorList>
    </citation>
    <scope>INTERACTION WITH ESXR</scope>
</reference>
<reference key="3">
    <citation type="journal article" date="2009" name="PLoS Pathog.">
        <title>Systematic genetic nomenclature for type VII secretion systems.</title>
        <authorList>
            <person name="Bitter W."/>
            <person name="Houben E.N."/>
            <person name="Bottai D."/>
            <person name="Brodin P."/>
            <person name="Brown E.J."/>
            <person name="Cox J.S."/>
            <person name="Derbyshire K."/>
            <person name="Fortune S.M."/>
            <person name="Gao L.Y."/>
            <person name="Liu J."/>
            <person name="Gey van Pittius N.C."/>
            <person name="Pym A.S."/>
            <person name="Rubin E.J."/>
            <person name="Sherman D.R."/>
            <person name="Cole S.T."/>
            <person name="Brosch R."/>
        </authorList>
    </citation>
    <scope>NOMENCLATURE</scope>
</reference>
<reference evidence="7" key="4">
    <citation type="journal article" date="2010" name="Protein Sci.">
        <title>The crystal structure of the Mycobacterium tuberculosis Rv3019c-Rv3020c ESX complex reveals a domain-swapped heterotetramer.</title>
        <authorList>
            <person name="Arbing M.A."/>
            <person name="Kaufmann M."/>
            <person name="Phan T."/>
            <person name="Chan S."/>
            <person name="Cascio D."/>
            <person name="Eisenberg D."/>
        </authorList>
    </citation>
    <scope>X-RAY CRYSTALLOGRAPHY (1.91 ANGSTROMS)</scope>
    <scope>SUBUNIT</scope>
    <scope>DOMAIN</scope>
</reference>
<accession>Q6MX18</accession>
<accession>F2GP49</accession>
<accession>I6Y2A8</accession>
<sequence>MSLLDAHIPQLIASHTAFAAKAGLMRHTIGQAEQQAMSAQAFHQGESAAAFQGAHARFVAAAAKVNTLLDIAQANLGEAAGTYVAADAAAASSYTGF</sequence>
<proteinExistence type="evidence at protein level"/>
<gene>
    <name evidence="3" type="primary">esxS</name>
    <name evidence="6" type="ordered locus">Rv3020c</name>
</gene>
<keyword id="KW-0002">3D-structure</keyword>
<keyword id="KW-1185">Reference proteome</keyword>
<keyword id="KW-0964">Secreted</keyword>
<organism>
    <name type="scientific">Mycobacterium tuberculosis (strain ATCC 25618 / H37Rv)</name>
    <dbReference type="NCBI Taxonomy" id="83332"/>
    <lineage>
        <taxon>Bacteria</taxon>
        <taxon>Bacillati</taxon>
        <taxon>Actinomycetota</taxon>
        <taxon>Actinomycetes</taxon>
        <taxon>Mycobacteriales</taxon>
        <taxon>Mycobacteriaceae</taxon>
        <taxon>Mycobacterium</taxon>
        <taxon>Mycobacterium tuberculosis complex</taxon>
    </lineage>
</organism>
<evidence type="ECO:0000269" key="1">
    <source>
    </source>
</evidence>
<evidence type="ECO:0000269" key="2">
    <source>
    </source>
</evidence>
<evidence type="ECO:0000303" key="3">
    <source>
    </source>
</evidence>
<evidence type="ECO:0000305" key="4"/>
<evidence type="ECO:0000305" key="5">
    <source>
    </source>
</evidence>
<evidence type="ECO:0000312" key="6">
    <source>
        <dbReference type="EMBL" id="CCP45827.1"/>
    </source>
</evidence>
<evidence type="ECO:0007744" key="7">
    <source>
        <dbReference type="PDB" id="3H6P"/>
    </source>
</evidence>
<evidence type="ECO:0007829" key="8">
    <source>
        <dbReference type="PDB" id="3H6P"/>
    </source>
</evidence>
<feature type="chain" id="PRO_0000436932" description="ESAT-6-like protein EsxS">
    <location>
        <begin position="1"/>
        <end position="97"/>
    </location>
</feature>
<feature type="helix" evidence="8">
    <location>
        <begin position="18"/>
        <end position="74"/>
    </location>
</feature>
<feature type="helix" evidence="8">
    <location>
        <begin position="77"/>
        <end position="79"/>
    </location>
</feature>
<comment type="subunit">
    <text evidence="1 2">Forms a tight complex with EsxR (PubMed:15336430). Exists in heterodimeric and heterotetrameric forms (PubMed:20629176).</text>
</comment>
<comment type="subcellular location">
    <subcellularLocation>
        <location evidence="5">Secreted</location>
    </subcellularLocation>
    <text evidence="5">Probably secreted via the ESX-3 / type VII secretion system (T7SS).</text>
</comment>
<comment type="domain">
    <text evidence="2">In the heterotetrameric form, EsxS adopts a long helical conformation that pairs with a second EsxS monomer in an antiparallel manner that allows the N- and C-termini of two EsxS subunits to interact with an EsxR subunit at each end of the EsxS dimer thus creating a molecule with four-helix bundles at its extremities.</text>
</comment>
<comment type="similarity">
    <text evidence="5">Belongs to the WXG100 family. CFP-10 subfamily.</text>
</comment>
<dbReference type="EMBL" id="AL123456">
    <property type="protein sequence ID" value="CCP45827.1"/>
    <property type="molecule type" value="Genomic_DNA"/>
</dbReference>
<dbReference type="RefSeq" id="YP_177919.1">
    <property type="nucleotide sequence ID" value="NC_000962.3"/>
</dbReference>
<dbReference type="PDB" id="3H6P">
    <property type="method" value="X-ray"/>
    <property type="resolution" value="1.91 A"/>
    <property type="chains" value="A/B=1-97"/>
</dbReference>
<dbReference type="PDBsum" id="3H6P"/>
<dbReference type="SMR" id="Q6MX18"/>
<dbReference type="STRING" id="83332.Rv3020c"/>
<dbReference type="PaxDb" id="83332-Rv3020c"/>
<dbReference type="DNASU" id="888946"/>
<dbReference type="GeneID" id="888946"/>
<dbReference type="KEGG" id="mtu:Rv3020c"/>
<dbReference type="KEGG" id="mtv:RVBD_3020c"/>
<dbReference type="PATRIC" id="fig|83332.111.peg.3366"/>
<dbReference type="TubercuList" id="Rv3020c"/>
<dbReference type="eggNOG" id="ENOG5030NJS">
    <property type="taxonomic scope" value="Bacteria"/>
</dbReference>
<dbReference type="HOGENOM" id="CLU_161983_0_0_11"/>
<dbReference type="InParanoid" id="Q6MX18"/>
<dbReference type="OrthoDB" id="4750882at2"/>
<dbReference type="PhylomeDB" id="Q6MX18"/>
<dbReference type="EvolutionaryTrace" id="Q6MX18"/>
<dbReference type="Proteomes" id="UP000001584">
    <property type="component" value="Chromosome"/>
</dbReference>
<dbReference type="GO" id="GO:0005576">
    <property type="term" value="C:extracellular region"/>
    <property type="evidence" value="ECO:0007669"/>
    <property type="project" value="UniProtKB-SubCell"/>
</dbReference>
<dbReference type="GO" id="GO:0032991">
    <property type="term" value="C:protein-containing complex"/>
    <property type="evidence" value="ECO:0000314"/>
    <property type="project" value="MTBBASE"/>
</dbReference>
<dbReference type="FunFam" id="1.10.287.1060:FF:000013">
    <property type="entry name" value="ESAT-6 like protein EsxS"/>
    <property type="match status" value="1"/>
</dbReference>
<dbReference type="Gene3D" id="1.10.287.1060">
    <property type="entry name" value="ESAT-6-like"/>
    <property type="match status" value="1"/>
</dbReference>
<dbReference type="InterPro" id="IPR036689">
    <property type="entry name" value="ESAT-6-like_sf"/>
</dbReference>
<dbReference type="InterPro" id="IPR010310">
    <property type="entry name" value="T7SS_ESAT-6-like"/>
</dbReference>
<dbReference type="Pfam" id="PF06013">
    <property type="entry name" value="WXG100"/>
    <property type="match status" value="1"/>
</dbReference>
<dbReference type="SUPFAM" id="SSF140453">
    <property type="entry name" value="EsxAB dimer-like"/>
    <property type="match status" value="1"/>
</dbReference>
<name>ESXS_MYCTU</name>
<protein>
    <recommendedName>
        <fullName evidence="4">ESAT-6-like protein EsxS</fullName>
    </recommendedName>
</protein>